<dbReference type="EMBL" id="X14363">
    <property type="protein sequence ID" value="CAA32543.1"/>
    <property type="molecule type" value="Genomic_DNA"/>
</dbReference>
<dbReference type="EMBL" id="BX936398">
    <property type="protein sequence ID" value="CAH22935.1"/>
    <property type="status" value="ALT_INIT"/>
    <property type="molecule type" value="Genomic_DNA"/>
</dbReference>
<dbReference type="PIR" id="S04141">
    <property type="entry name" value="R5EB4Y"/>
</dbReference>
<dbReference type="RefSeq" id="WP_002218934.1">
    <property type="nucleotide sequence ID" value="NZ_CP009712.1"/>
</dbReference>
<dbReference type="SMR" id="P60731"/>
<dbReference type="GeneID" id="96663195"/>
<dbReference type="KEGG" id="ypo:BZ17_2890"/>
<dbReference type="KEGG" id="yps:YPTB3697"/>
<dbReference type="PATRIC" id="fig|273123.14.peg.3031"/>
<dbReference type="Proteomes" id="UP000001011">
    <property type="component" value="Chromosome"/>
</dbReference>
<dbReference type="GO" id="GO:1990904">
    <property type="term" value="C:ribonucleoprotein complex"/>
    <property type="evidence" value="ECO:0007669"/>
    <property type="project" value="UniProtKB-KW"/>
</dbReference>
<dbReference type="GO" id="GO:0005840">
    <property type="term" value="C:ribosome"/>
    <property type="evidence" value="ECO:0007669"/>
    <property type="project" value="UniProtKB-KW"/>
</dbReference>
<dbReference type="GO" id="GO:0019843">
    <property type="term" value="F:rRNA binding"/>
    <property type="evidence" value="ECO:0007669"/>
    <property type="project" value="UniProtKB-UniRule"/>
</dbReference>
<dbReference type="GO" id="GO:0003735">
    <property type="term" value="F:structural constituent of ribosome"/>
    <property type="evidence" value="ECO:0007669"/>
    <property type="project" value="InterPro"/>
</dbReference>
<dbReference type="GO" id="GO:0006353">
    <property type="term" value="P:DNA-templated transcription termination"/>
    <property type="evidence" value="ECO:0007669"/>
    <property type="project" value="UniProtKB-KW"/>
</dbReference>
<dbReference type="GO" id="GO:0006417">
    <property type="term" value="P:regulation of translation"/>
    <property type="evidence" value="ECO:0007669"/>
    <property type="project" value="UniProtKB-KW"/>
</dbReference>
<dbReference type="GO" id="GO:0006412">
    <property type="term" value="P:translation"/>
    <property type="evidence" value="ECO:0007669"/>
    <property type="project" value="UniProtKB-UniRule"/>
</dbReference>
<dbReference type="FunFam" id="3.40.1370.10:FF:000001">
    <property type="entry name" value="50S ribosomal protein L4"/>
    <property type="match status" value="1"/>
</dbReference>
<dbReference type="Gene3D" id="3.40.1370.10">
    <property type="match status" value="1"/>
</dbReference>
<dbReference type="HAMAP" id="MF_01328_B">
    <property type="entry name" value="Ribosomal_uL4_B"/>
    <property type="match status" value="1"/>
</dbReference>
<dbReference type="InterPro" id="IPR002136">
    <property type="entry name" value="Ribosomal_uL4"/>
</dbReference>
<dbReference type="InterPro" id="IPR013005">
    <property type="entry name" value="Ribosomal_uL4-like"/>
</dbReference>
<dbReference type="InterPro" id="IPR023574">
    <property type="entry name" value="Ribosomal_uL4_dom_sf"/>
</dbReference>
<dbReference type="NCBIfam" id="TIGR03953">
    <property type="entry name" value="rplD_bact"/>
    <property type="match status" value="1"/>
</dbReference>
<dbReference type="PANTHER" id="PTHR10746">
    <property type="entry name" value="50S RIBOSOMAL PROTEIN L4"/>
    <property type="match status" value="1"/>
</dbReference>
<dbReference type="PANTHER" id="PTHR10746:SF6">
    <property type="entry name" value="LARGE RIBOSOMAL SUBUNIT PROTEIN UL4M"/>
    <property type="match status" value="1"/>
</dbReference>
<dbReference type="Pfam" id="PF00573">
    <property type="entry name" value="Ribosomal_L4"/>
    <property type="match status" value="1"/>
</dbReference>
<dbReference type="SUPFAM" id="SSF52166">
    <property type="entry name" value="Ribosomal protein L4"/>
    <property type="match status" value="1"/>
</dbReference>
<gene>
    <name type="primary">rplD</name>
    <name type="synonym">eryA</name>
    <name type="ordered locus">YPTB3697</name>
</gene>
<organism>
    <name type="scientific">Yersinia pseudotuberculosis serotype I (strain IP32953)</name>
    <dbReference type="NCBI Taxonomy" id="273123"/>
    <lineage>
        <taxon>Bacteria</taxon>
        <taxon>Pseudomonadati</taxon>
        <taxon>Pseudomonadota</taxon>
        <taxon>Gammaproteobacteria</taxon>
        <taxon>Enterobacterales</taxon>
        <taxon>Yersiniaceae</taxon>
        <taxon>Yersinia</taxon>
    </lineage>
</organism>
<evidence type="ECO:0000250" key="1"/>
<evidence type="ECO:0000256" key="2">
    <source>
        <dbReference type="SAM" id="MobiDB-lite"/>
    </source>
</evidence>
<evidence type="ECO:0000305" key="3"/>
<accession>P60731</accession>
<accession>P11253</accession>
<accession>Q664S2</accession>
<proteinExistence type="inferred from homology"/>
<sequence>MELVMKDAPGALTVSETTFGRDFNEALVHQVVVAYAAGARQGTRAQKTRAEVTGSGKKPWRQKGTGRARAGSVKSPIWRSGGVTFAAKPQDHSQKVNKKMYRGALKSILSELVRQDRLIIVEKFSVEAPKTKLLAQKLKDMALEDVLIVTGELDENLFLAARNLYKVDVRDVAGIDPVSLIAFDKVVMTADAVKQVEEMLA</sequence>
<protein>
    <recommendedName>
        <fullName evidence="3">Large ribosomal subunit protein uL4</fullName>
    </recommendedName>
    <alternativeName>
        <fullName>50S ribosomal protein L4</fullName>
    </alternativeName>
</protein>
<name>RL4_YERPS</name>
<reference key="1">
    <citation type="journal article" date="1989" name="Nucleic Acids Res.">
        <title>High degree of conservation between ribosomal proteins of Yersinia pseudotuberculosis and Escherichia coli.</title>
        <authorList>
            <person name="Gross U."/>
            <person name="Chen J.H."/>
            <person name="Kono D.H."/>
            <person name="Lobo J.G."/>
            <person name="Yu D.T.Y."/>
        </authorList>
    </citation>
    <scope>NUCLEOTIDE SEQUENCE [GENOMIC DNA]</scope>
</reference>
<reference key="2">
    <citation type="journal article" date="2004" name="Proc. Natl. Acad. Sci. U.S.A.">
        <title>Insights into the evolution of Yersinia pestis through whole-genome comparison with Yersinia pseudotuberculosis.</title>
        <authorList>
            <person name="Chain P.S.G."/>
            <person name="Carniel E."/>
            <person name="Larimer F.W."/>
            <person name="Lamerdin J."/>
            <person name="Stoutland P.O."/>
            <person name="Regala W.M."/>
            <person name="Georgescu A.M."/>
            <person name="Vergez L.M."/>
            <person name="Land M.L."/>
            <person name="Motin V.L."/>
            <person name="Brubaker R.R."/>
            <person name="Fowler J."/>
            <person name="Hinnebusch J."/>
            <person name="Marceau M."/>
            <person name="Medigue C."/>
            <person name="Simonet M."/>
            <person name="Chenal-Francisque V."/>
            <person name="Souza B."/>
            <person name="Dacheux D."/>
            <person name="Elliott J.M."/>
            <person name="Derbise A."/>
            <person name="Hauser L.J."/>
            <person name="Garcia E."/>
        </authorList>
    </citation>
    <scope>NUCLEOTIDE SEQUENCE [LARGE SCALE GENOMIC DNA]</scope>
    <source>
        <strain>IP32953</strain>
    </source>
</reference>
<reference key="3">
    <citation type="journal article" date="1995" name="Biochem. Cell Biol.">
        <title>Regulation of the Escherichia coli S10 ribosomal protein operon by heterologous L4 ribosomal proteins.</title>
        <authorList>
            <person name="Zengel J.M."/>
            <person name="Vorozheikina D."/>
            <person name="Li X."/>
            <person name="Lindahl L."/>
        </authorList>
    </citation>
    <scope>ABILITY TO REPRESS THE E.COLI S10 OPERON</scope>
</reference>
<keyword id="KW-0678">Repressor</keyword>
<keyword id="KW-0687">Ribonucleoprotein</keyword>
<keyword id="KW-0689">Ribosomal protein</keyword>
<keyword id="KW-0694">RNA-binding</keyword>
<keyword id="KW-0699">rRNA-binding</keyword>
<keyword id="KW-0804">Transcription</keyword>
<keyword id="KW-0805">Transcription regulation</keyword>
<keyword id="KW-0806">Transcription termination</keyword>
<keyword id="KW-0810">Translation regulation</keyword>
<comment type="function">
    <text evidence="1">One of the primary rRNA binding proteins, this protein initially binds near the 5'-end of the 23S rRNA. It is important during the early stages of 50S assembly. It makes multiple contacts with different domains of the 23S rRNA in the assembled 50S subunit and ribosome (By similarity).</text>
</comment>
<comment type="function">
    <text evidence="1">Protein L4 is a both a transcriptional repressor and a translational repressor protein. It regulates transcription of the S10 operon (to which L4 belongs) by causing premature termination of transcription within the S10 leader. L4 controls the translation of the S10 operon by binding to its mRNA (By similarity).</text>
</comment>
<comment type="function">
    <text>This protein when expressed in E.coli represses both transcription and translation of the endogenous S10 operon.</text>
</comment>
<comment type="function">
    <text evidence="1">Forms part of the polypeptide exit tunnel.</text>
</comment>
<comment type="subunit">
    <text evidence="1">Part of the 50S ribosomal subunit.</text>
</comment>
<comment type="similarity">
    <text evidence="3">Belongs to the universal ribosomal protein uL4 family.</text>
</comment>
<comment type="sequence caution" evidence="3">
    <conflict type="erroneous initiation">
        <sequence resource="EMBL-CDS" id="CAH22935"/>
    </conflict>
</comment>
<feature type="chain" id="PRO_0000129320" description="Large ribosomal subunit protein uL4">
    <location>
        <begin position="1"/>
        <end position="201"/>
    </location>
</feature>
<feature type="region of interest" description="Disordered" evidence="2">
    <location>
        <begin position="45"/>
        <end position="73"/>
    </location>
</feature>